<comment type="function">
    <text>Involved in osmoadaptation.</text>
</comment>
<comment type="induction">
    <text evidence="3">Up-regulated when grown with elevated levels of potassium chloride.</text>
</comment>
<comment type="similarity">
    <text evidence="4">Belongs to the short-chain dehydrogenases/reductases (SDR) family.</text>
</comment>
<comment type="sequence caution" evidence="4">
    <conflict type="erroneous gene model prediction">
        <sequence resource="EMBL-CDS" id="EAA61587"/>
    </conflict>
</comment>
<sequence>MVRIFITGSSDGIGQAAAKVLSEQGHSVVLHARNADRAASAQEAVPGAEAVLVGDLSSIAETKALAEEANKLPPFDTVIHNAGIGYGATASQEITADKISAVFAVNTLAPYILTCLMHKPKARLLYMSSDSHYGGDESLRNITQSHSYGNTKLHDVMLANAFSRRWGNAIQVVSMHPGWVRTKMGGVMAPGALDRPARVLADWAIGKGDLARLKSGTFFTTSGPESAHPGADNVQKQEELLRICKEVSGVGVPGG</sequence>
<dbReference type="EC" id="1.-.-.-"/>
<dbReference type="EMBL" id="AACD01000132">
    <property type="protein sequence ID" value="EAA61587.1"/>
    <property type="status" value="ALT_SEQ"/>
    <property type="molecule type" value="Genomic_DNA"/>
</dbReference>
<dbReference type="EMBL" id="BN001304">
    <property type="protein sequence ID" value="CBF80131.1"/>
    <property type="molecule type" value="Genomic_DNA"/>
</dbReference>
<dbReference type="RefSeq" id="XP_681068.1">
    <property type="nucleotide sequence ID" value="XM_675976.1"/>
</dbReference>
<dbReference type="SMR" id="Q5AV81"/>
<dbReference type="EnsemblFungi" id="CBF80131">
    <property type="protein sequence ID" value="CBF80131"/>
    <property type="gene ID" value="ANIA_07799"/>
</dbReference>
<dbReference type="KEGG" id="ani:ANIA_07799"/>
<dbReference type="VEuPathDB" id="FungiDB:AN7799"/>
<dbReference type="eggNOG" id="KOG1208">
    <property type="taxonomic scope" value="Eukaryota"/>
</dbReference>
<dbReference type="HOGENOM" id="CLU_010194_44_5_1"/>
<dbReference type="InParanoid" id="Q5AV81"/>
<dbReference type="OMA" id="EAYGQHW"/>
<dbReference type="OrthoDB" id="191139at2759"/>
<dbReference type="Proteomes" id="UP000000560">
    <property type="component" value="Chromosome IV"/>
</dbReference>
<dbReference type="GO" id="GO:0016491">
    <property type="term" value="F:oxidoreductase activity"/>
    <property type="evidence" value="ECO:0007669"/>
    <property type="project" value="UniProtKB-KW"/>
</dbReference>
<dbReference type="GO" id="GO:0071470">
    <property type="term" value="P:cellular response to osmotic stress"/>
    <property type="evidence" value="ECO:0000270"/>
    <property type="project" value="AspGD"/>
</dbReference>
<dbReference type="FunFam" id="3.40.50.720:FF:000971">
    <property type="entry name" value="Putative daunorubicin C-13 ketoreductase DnrU"/>
    <property type="match status" value="1"/>
</dbReference>
<dbReference type="Gene3D" id="3.40.50.720">
    <property type="entry name" value="NAD(P)-binding Rossmann-like Domain"/>
    <property type="match status" value="1"/>
</dbReference>
<dbReference type="InterPro" id="IPR036291">
    <property type="entry name" value="NAD(P)-bd_dom_sf"/>
</dbReference>
<dbReference type="InterPro" id="IPR002347">
    <property type="entry name" value="SDR_fam"/>
</dbReference>
<dbReference type="PANTHER" id="PTHR24320:SF274">
    <property type="entry name" value="CHAIN DEHYDROGENASE, PUTATIVE (AFU_ORTHOLOGUE AFUA_4G00440)-RELATED"/>
    <property type="match status" value="1"/>
</dbReference>
<dbReference type="PANTHER" id="PTHR24320">
    <property type="entry name" value="RETINOL DEHYDROGENASE"/>
    <property type="match status" value="1"/>
</dbReference>
<dbReference type="Pfam" id="PF00106">
    <property type="entry name" value="adh_short"/>
    <property type="match status" value="1"/>
</dbReference>
<dbReference type="PRINTS" id="PR00081">
    <property type="entry name" value="GDHRDH"/>
</dbReference>
<dbReference type="SUPFAM" id="SSF51735">
    <property type="entry name" value="NAD(P)-binding Rossmann-fold domains"/>
    <property type="match status" value="1"/>
</dbReference>
<protein>
    <recommendedName>
        <fullName>Uncharacterized oxidoreductase AN7799</fullName>
        <ecNumber>1.-.-.-</ecNumber>
    </recommendedName>
</protein>
<evidence type="ECO:0000250" key="1">
    <source>
        <dbReference type="UniProtKB" id="L0E2Z4"/>
    </source>
</evidence>
<evidence type="ECO:0000250" key="2">
    <source>
        <dbReference type="UniProtKB" id="O93868"/>
    </source>
</evidence>
<evidence type="ECO:0000269" key="3">
    <source>
    </source>
</evidence>
<evidence type="ECO:0000305" key="4"/>
<reference key="1">
    <citation type="journal article" date="2005" name="Nature">
        <title>Sequencing of Aspergillus nidulans and comparative analysis with A. fumigatus and A. oryzae.</title>
        <authorList>
            <person name="Galagan J.E."/>
            <person name="Calvo S.E."/>
            <person name="Cuomo C."/>
            <person name="Ma L.-J."/>
            <person name="Wortman J.R."/>
            <person name="Batzoglou S."/>
            <person name="Lee S.-I."/>
            <person name="Bastuerkmen M."/>
            <person name="Spevak C.C."/>
            <person name="Clutterbuck J."/>
            <person name="Kapitonov V."/>
            <person name="Jurka J."/>
            <person name="Scazzocchio C."/>
            <person name="Farman M.L."/>
            <person name="Butler J."/>
            <person name="Purcell S."/>
            <person name="Harris S."/>
            <person name="Braus G.H."/>
            <person name="Draht O."/>
            <person name="Busch S."/>
            <person name="D'Enfert C."/>
            <person name="Bouchier C."/>
            <person name="Goldman G.H."/>
            <person name="Bell-Pedersen D."/>
            <person name="Griffiths-Jones S."/>
            <person name="Doonan J.H."/>
            <person name="Yu J."/>
            <person name="Vienken K."/>
            <person name="Pain A."/>
            <person name="Freitag M."/>
            <person name="Selker E.U."/>
            <person name="Archer D.B."/>
            <person name="Penalva M.A."/>
            <person name="Oakley B.R."/>
            <person name="Momany M."/>
            <person name="Tanaka T."/>
            <person name="Kumagai T."/>
            <person name="Asai K."/>
            <person name="Machida M."/>
            <person name="Nierman W.C."/>
            <person name="Denning D.W."/>
            <person name="Caddick M.X."/>
            <person name="Hynes M."/>
            <person name="Paoletti M."/>
            <person name="Fischer R."/>
            <person name="Miller B.L."/>
            <person name="Dyer P.S."/>
            <person name="Sachs M.S."/>
            <person name="Osmani S.A."/>
            <person name="Birren B.W."/>
        </authorList>
    </citation>
    <scope>NUCLEOTIDE SEQUENCE [LARGE SCALE GENOMIC DNA]</scope>
    <source>
        <strain>FGSC A4 / ATCC 38163 / CBS 112.46 / NRRL 194 / M139</strain>
    </source>
</reference>
<reference key="2">
    <citation type="journal article" date="2009" name="Fungal Genet. Biol.">
        <title>The 2008 update of the Aspergillus nidulans genome annotation: a community effort.</title>
        <authorList>
            <person name="Wortman J.R."/>
            <person name="Gilsenan J.M."/>
            <person name="Joardar V."/>
            <person name="Deegan J."/>
            <person name="Clutterbuck J."/>
            <person name="Andersen M.R."/>
            <person name="Archer D."/>
            <person name="Bencina M."/>
            <person name="Braus G."/>
            <person name="Coutinho P."/>
            <person name="von Dohren H."/>
            <person name="Doonan J."/>
            <person name="Driessen A.J."/>
            <person name="Durek P."/>
            <person name="Espeso E."/>
            <person name="Fekete E."/>
            <person name="Flipphi M."/>
            <person name="Estrada C.G."/>
            <person name="Geysens S."/>
            <person name="Goldman G."/>
            <person name="de Groot P.W."/>
            <person name="Hansen K."/>
            <person name="Harris S.D."/>
            <person name="Heinekamp T."/>
            <person name="Helmstaedt K."/>
            <person name="Henrissat B."/>
            <person name="Hofmann G."/>
            <person name="Homan T."/>
            <person name="Horio T."/>
            <person name="Horiuchi H."/>
            <person name="James S."/>
            <person name="Jones M."/>
            <person name="Karaffa L."/>
            <person name="Karanyi Z."/>
            <person name="Kato M."/>
            <person name="Keller N."/>
            <person name="Kelly D.E."/>
            <person name="Kiel J.A."/>
            <person name="Kim J.M."/>
            <person name="van der Klei I.J."/>
            <person name="Klis F.M."/>
            <person name="Kovalchuk A."/>
            <person name="Krasevec N."/>
            <person name="Kubicek C.P."/>
            <person name="Liu B."/>
            <person name="Maccabe A."/>
            <person name="Meyer V."/>
            <person name="Mirabito P."/>
            <person name="Miskei M."/>
            <person name="Mos M."/>
            <person name="Mullins J."/>
            <person name="Nelson D.R."/>
            <person name="Nielsen J."/>
            <person name="Oakley B.R."/>
            <person name="Osmani S.A."/>
            <person name="Pakula T."/>
            <person name="Paszewski A."/>
            <person name="Paulsen I."/>
            <person name="Pilsyk S."/>
            <person name="Pocsi I."/>
            <person name="Punt P.J."/>
            <person name="Ram A.F."/>
            <person name="Ren Q."/>
            <person name="Robellet X."/>
            <person name="Robson G."/>
            <person name="Seiboth B."/>
            <person name="van Solingen P."/>
            <person name="Specht T."/>
            <person name="Sun J."/>
            <person name="Taheri-Talesh N."/>
            <person name="Takeshita N."/>
            <person name="Ussery D."/>
            <person name="vanKuyk P.A."/>
            <person name="Visser H."/>
            <person name="van de Vondervoort P.J."/>
            <person name="de Vries R.P."/>
            <person name="Walton J."/>
            <person name="Xiang X."/>
            <person name="Xiong Y."/>
            <person name="Zeng A.P."/>
            <person name="Brandt B.W."/>
            <person name="Cornell M.J."/>
            <person name="van den Hondel C.A."/>
            <person name="Visser J."/>
            <person name="Oliver S.G."/>
            <person name="Turner G."/>
        </authorList>
    </citation>
    <scope>GENOME REANNOTATION</scope>
    <source>
        <strain>FGSC A4 / ATCC 38163 / CBS 112.46 / NRRL 194 / M139</strain>
    </source>
</reference>
<reference key="3">
    <citation type="journal article" date="2007" name="Fungal Genet. Biol.">
        <title>Proteome map of Aspergillus nidulans during osmoadaptation.</title>
        <authorList>
            <person name="Kim Y."/>
            <person name="Nandakumar M.P."/>
            <person name="Marten M.R."/>
        </authorList>
    </citation>
    <scope>INDUCTION</scope>
    <scope>IDENTIFICATION BY MASS SPECTROMETRY</scope>
</reference>
<keyword id="KW-0521">NADP</keyword>
<keyword id="KW-0560">Oxidoreductase</keyword>
<keyword id="KW-1185">Reference proteome</keyword>
<keyword id="KW-0346">Stress response</keyword>
<accession>Q5AV81</accession>
<accession>C8VDS0</accession>
<organism>
    <name type="scientific">Emericella nidulans (strain FGSC A4 / ATCC 38163 / CBS 112.46 / NRRL 194 / M139)</name>
    <name type="common">Aspergillus nidulans</name>
    <dbReference type="NCBI Taxonomy" id="227321"/>
    <lineage>
        <taxon>Eukaryota</taxon>
        <taxon>Fungi</taxon>
        <taxon>Dikarya</taxon>
        <taxon>Ascomycota</taxon>
        <taxon>Pezizomycotina</taxon>
        <taxon>Eurotiomycetes</taxon>
        <taxon>Eurotiomycetidae</taxon>
        <taxon>Eurotiales</taxon>
        <taxon>Aspergillaceae</taxon>
        <taxon>Aspergillus</taxon>
        <taxon>Aspergillus subgen. Nidulantes</taxon>
    </lineage>
</organism>
<proteinExistence type="evidence at protein level"/>
<gene>
    <name type="ORF">AN7799</name>
</gene>
<name>Y7799_EMENI</name>
<feature type="chain" id="PRO_0000348274" description="Uncharacterized oxidoreductase AN7799">
    <location>
        <begin position="1"/>
        <end position="255"/>
    </location>
</feature>
<feature type="active site" description="Proton donor" evidence="2">
    <location>
        <position position="148"/>
    </location>
</feature>
<feature type="active site" description="Lowers pKa of active site Tyr" evidence="2">
    <location>
        <position position="152"/>
    </location>
</feature>
<feature type="binding site" evidence="1">
    <location>
        <position position="13"/>
    </location>
    <ligand>
        <name>NADP(+)</name>
        <dbReference type="ChEBI" id="CHEBI:58349"/>
    </ligand>
</feature>
<feature type="binding site" evidence="1">
    <location>
        <position position="37"/>
    </location>
    <ligand>
        <name>NADP(+)</name>
        <dbReference type="ChEBI" id="CHEBI:58349"/>
    </ligand>
</feature>
<feature type="binding site" evidence="1">
    <location>
        <position position="55"/>
    </location>
    <ligand>
        <name>NADP(+)</name>
        <dbReference type="ChEBI" id="CHEBI:58349"/>
    </ligand>
</feature>
<feature type="binding site" evidence="2">
    <location>
        <position position="81"/>
    </location>
    <ligand>
        <name>NADP(+)</name>
        <dbReference type="ChEBI" id="CHEBI:58349"/>
    </ligand>
</feature>
<feature type="binding site" evidence="2">
    <location>
        <position position="148"/>
    </location>
    <ligand>
        <name>NADP(+)</name>
        <dbReference type="ChEBI" id="CHEBI:58349"/>
    </ligand>
</feature>
<feature type="binding site" evidence="2">
    <location>
        <position position="152"/>
    </location>
    <ligand>
        <name>NADP(+)</name>
        <dbReference type="ChEBI" id="CHEBI:58349"/>
    </ligand>
</feature>
<feature type="binding site" evidence="2">
    <location>
        <position position="180"/>
    </location>
    <ligand>
        <name>NADP(+)</name>
        <dbReference type="ChEBI" id="CHEBI:58349"/>
    </ligand>
</feature>
<feature type="binding site" evidence="1">
    <location>
        <position position="182"/>
    </location>
    <ligand>
        <name>NADP(+)</name>
        <dbReference type="ChEBI" id="CHEBI:58349"/>
    </ligand>
</feature>